<keyword id="KW-1185">Reference proteome</keyword>
<gene>
    <name type="ordered locus">Smlt1098</name>
</gene>
<accession>B2FRV1</accession>
<organism>
    <name type="scientific">Stenotrophomonas maltophilia (strain K279a)</name>
    <dbReference type="NCBI Taxonomy" id="522373"/>
    <lineage>
        <taxon>Bacteria</taxon>
        <taxon>Pseudomonadati</taxon>
        <taxon>Pseudomonadota</taxon>
        <taxon>Gammaproteobacteria</taxon>
        <taxon>Lysobacterales</taxon>
        <taxon>Lysobacteraceae</taxon>
        <taxon>Stenotrophomonas</taxon>
        <taxon>Stenotrophomonas maltophilia group</taxon>
    </lineage>
</organism>
<dbReference type="EMBL" id="AM743169">
    <property type="protein sequence ID" value="CAQ44656.1"/>
    <property type="molecule type" value="Genomic_DNA"/>
</dbReference>
<dbReference type="RefSeq" id="WP_005408377.1">
    <property type="nucleotide sequence ID" value="NC_010943.1"/>
</dbReference>
<dbReference type="SMR" id="B2FRV1"/>
<dbReference type="EnsemblBacteria" id="CAQ44656">
    <property type="protein sequence ID" value="CAQ44656"/>
    <property type="gene ID" value="Smlt1098"/>
</dbReference>
<dbReference type="KEGG" id="sml:Smlt1098"/>
<dbReference type="eggNOG" id="COG1678">
    <property type="taxonomic scope" value="Bacteria"/>
</dbReference>
<dbReference type="HOGENOM" id="CLU_057596_1_0_6"/>
<dbReference type="Proteomes" id="UP000008840">
    <property type="component" value="Chromosome"/>
</dbReference>
<dbReference type="GO" id="GO:0005829">
    <property type="term" value="C:cytosol"/>
    <property type="evidence" value="ECO:0007669"/>
    <property type="project" value="TreeGrafter"/>
</dbReference>
<dbReference type="Gene3D" id="3.40.1740.10">
    <property type="entry name" value="VC0467-like"/>
    <property type="match status" value="1"/>
</dbReference>
<dbReference type="HAMAP" id="MF_00758">
    <property type="entry name" value="UPF0301"/>
    <property type="match status" value="1"/>
</dbReference>
<dbReference type="InterPro" id="IPR003774">
    <property type="entry name" value="AlgH-like"/>
</dbReference>
<dbReference type="NCBIfam" id="NF001266">
    <property type="entry name" value="PRK00228.1-1"/>
    <property type="match status" value="1"/>
</dbReference>
<dbReference type="PANTHER" id="PTHR30327">
    <property type="entry name" value="UNCHARACTERIZED PROTEIN YQGE"/>
    <property type="match status" value="1"/>
</dbReference>
<dbReference type="PANTHER" id="PTHR30327:SF1">
    <property type="entry name" value="UPF0301 PROTEIN YQGE"/>
    <property type="match status" value="1"/>
</dbReference>
<dbReference type="Pfam" id="PF02622">
    <property type="entry name" value="DUF179"/>
    <property type="match status" value="1"/>
</dbReference>
<dbReference type="SUPFAM" id="SSF143456">
    <property type="entry name" value="VC0467-like"/>
    <property type="match status" value="1"/>
</dbReference>
<feature type="chain" id="PRO_1000198302" description="UPF0301 protein Smlt1098">
    <location>
        <begin position="1"/>
        <end position="188"/>
    </location>
</feature>
<name>Y1098_STRMK</name>
<proteinExistence type="inferred from homology"/>
<comment type="similarity">
    <text evidence="1">Belongs to the UPF0301 (AlgH) family.</text>
</comment>
<protein>
    <recommendedName>
        <fullName evidence="1">UPF0301 protein Smlt1098</fullName>
    </recommendedName>
</protein>
<sequence length="188" mass="20041">MPVTPTSLADHLLVALPSLLDATFARSVALICQHDENGAMGVLVNQPSEYTLGEVLAQMDITTGDGDLQARMVLNGGPVHPERGFVIHDDARAWDSSLTVGDGLYLTTSRDILEAMARGEGPANAVVTLGCAGWGAGQLESELSENSWLTVPADAELVFQLPLEQRWQGAASRIGVDLFRLTDYSGHV</sequence>
<reference key="1">
    <citation type="journal article" date="2008" name="Genome Biol.">
        <title>The complete genome, comparative and functional analysis of Stenotrophomonas maltophilia reveals an organism heavily shielded by drug resistance determinants.</title>
        <authorList>
            <person name="Crossman L.C."/>
            <person name="Gould V.C."/>
            <person name="Dow J.M."/>
            <person name="Vernikos G.S."/>
            <person name="Okazaki A."/>
            <person name="Sebaihia M."/>
            <person name="Saunders D."/>
            <person name="Arrowsmith C."/>
            <person name="Carver T."/>
            <person name="Peters N."/>
            <person name="Adlem E."/>
            <person name="Kerhornou A."/>
            <person name="Lord A."/>
            <person name="Murphy L."/>
            <person name="Seeger K."/>
            <person name="Squares R."/>
            <person name="Rutter S."/>
            <person name="Quail M.A."/>
            <person name="Rajandream M.A."/>
            <person name="Harris D."/>
            <person name="Churcher C."/>
            <person name="Bentley S.D."/>
            <person name="Parkhill J."/>
            <person name="Thomson N.R."/>
            <person name="Avison M.B."/>
        </authorList>
    </citation>
    <scope>NUCLEOTIDE SEQUENCE [LARGE SCALE GENOMIC DNA]</scope>
    <source>
        <strain>K279a</strain>
    </source>
</reference>
<evidence type="ECO:0000255" key="1">
    <source>
        <dbReference type="HAMAP-Rule" id="MF_00758"/>
    </source>
</evidence>